<accession>O49118</accession>
<reference key="1">
    <citation type="journal article" date="1998" name="Mol. Cells">
        <title>Induction of reproductive organ-preferential histone genes by wounding or methyl jasmonate.</title>
        <authorList>
            <person name="Kim S.-A."/>
            <person name="Kwak H.-J."/>
            <person name="Park M.-C."/>
            <person name="Kim S.-R."/>
        </authorList>
    </citation>
    <scope>NUCLEOTIDE SEQUENCE [MRNA]</scope>
    <source>
        <strain>cv. Happy Dry</strain>
        <tissue>Flower</tissue>
    </source>
</reference>
<name>H2B_CAPAN</name>
<gene>
    <name type="primary">HIS2B</name>
</gene>
<organism>
    <name type="scientific">Capsicum annuum</name>
    <name type="common">Capsicum pepper</name>
    <dbReference type="NCBI Taxonomy" id="4072"/>
    <lineage>
        <taxon>Eukaryota</taxon>
        <taxon>Viridiplantae</taxon>
        <taxon>Streptophyta</taxon>
        <taxon>Embryophyta</taxon>
        <taxon>Tracheophyta</taxon>
        <taxon>Spermatophyta</taxon>
        <taxon>Magnoliopsida</taxon>
        <taxon>eudicotyledons</taxon>
        <taxon>Gunneridae</taxon>
        <taxon>Pentapetalae</taxon>
        <taxon>asterids</taxon>
        <taxon>lamiids</taxon>
        <taxon>Solanales</taxon>
        <taxon>Solanaceae</taxon>
        <taxon>Solanoideae</taxon>
        <taxon>Capsiceae</taxon>
        <taxon>Capsicum</taxon>
    </lineage>
</organism>
<evidence type="ECO:0000250" key="1"/>
<evidence type="ECO:0000256" key="2">
    <source>
        <dbReference type="SAM" id="MobiDB-lite"/>
    </source>
</evidence>
<evidence type="ECO:0000305" key="3"/>
<keyword id="KW-0007">Acetylation</keyword>
<keyword id="KW-0158">Chromosome</keyword>
<keyword id="KW-0238">DNA-binding</keyword>
<keyword id="KW-1017">Isopeptide bond</keyword>
<keyword id="KW-0544">Nucleosome core</keyword>
<keyword id="KW-0539">Nucleus</keyword>
<keyword id="KW-0832">Ubl conjugation</keyword>
<proteinExistence type="evidence at transcript level"/>
<comment type="function">
    <text>Core component of nucleosome. Nucleosomes wrap and compact DNA into chromatin, limiting DNA accessibility to the cellular machineries which require DNA as a template. Histones thereby play a central role in transcription regulation, DNA repair, DNA replication and chromosomal stability. DNA accessibility is regulated via a complex set of post-translational modifications of histones, also called histone code, and nucleosome remodeling.</text>
</comment>
<comment type="subunit">
    <text>The nucleosome is a histone octamer containing two molecules each of H2A, H2B, H3 and H4 assembled in one H3-H4 heterotetramer and two H2A-H2B heterodimers. The octamer wraps approximately 147 bp of DNA.</text>
</comment>
<comment type="subcellular location">
    <subcellularLocation>
        <location>Nucleus</location>
    </subcellularLocation>
    <subcellularLocation>
        <location>Chromosome</location>
    </subcellularLocation>
</comment>
<comment type="tissue specificity">
    <text>In anthers, floral buds, pollen, petals and fruits.</text>
</comment>
<comment type="induction">
    <text>By wounding and methyl jasmonate.</text>
</comment>
<comment type="PTM">
    <text evidence="1">Can be acetylated to form H2BK6ac, H2BK33ac and H2BK34ac.</text>
</comment>
<comment type="PTM">
    <text evidence="1">Monoubiquitinated to form H2BK143ub1; may give a specific tag for epigenetic transcriptional activation.</text>
</comment>
<comment type="similarity">
    <text evidence="3">Belongs to the histone H2B family.</text>
</comment>
<comment type="caution">
    <text evidence="3">To ensure consistency between histone entries, we follow the 'Brno' nomenclature for histone modifications, with positions referring to those used in the literature for the 'closest' model organism. Due to slight variations in histone sequences between organisms and to the presence of initiator methionine in UniProtKB/Swiss-Prot sequences, the actual positions of modified amino acids in the sequence generally differ. In this entry the following conventions are used: H2BK6ac = acetylated Lys-9; H2BK33ac = acetylated Lys-35; H2BK34ac = acetylated Lys-36; H2BK143ub1 = monoubiquitinated Lys-141.</text>
</comment>
<protein>
    <recommendedName>
        <fullName>Histone H2B</fullName>
    </recommendedName>
    <alternativeName>
        <fullName>CaH2B</fullName>
    </alternativeName>
</protein>
<feature type="initiator methionine" description="Removed" evidence="1">
    <location>
        <position position="1"/>
    </location>
</feature>
<feature type="chain" id="PRO_0000071909" description="Histone H2B">
    <location>
        <begin position="2"/>
        <end position="145"/>
    </location>
</feature>
<feature type="region of interest" description="Disordered" evidence="2">
    <location>
        <begin position="1"/>
        <end position="52"/>
    </location>
</feature>
<feature type="compositionally biased region" description="Basic and acidic residues" evidence="2">
    <location>
        <begin position="10"/>
        <end position="44"/>
    </location>
</feature>
<feature type="modified residue" description="N6-acetyllysine" evidence="1">
    <location>
        <position position="9"/>
    </location>
</feature>
<feature type="modified residue" description="N6-acetyllysine" evidence="1">
    <location>
        <position position="35"/>
    </location>
</feature>
<feature type="modified residue" description="N6-acetyllysine" evidence="1">
    <location>
        <position position="36"/>
    </location>
</feature>
<feature type="cross-link" description="Glycyl lysine isopeptide (Lys-Gly) (interchain with G-Cter in ubiquitin)" evidence="1">
    <location>
        <position position="141"/>
    </location>
</feature>
<dbReference type="EMBL" id="AF038386">
    <property type="protein sequence ID" value="AAB94923.1"/>
    <property type="molecule type" value="mRNA"/>
</dbReference>
<dbReference type="PIR" id="T08063">
    <property type="entry name" value="T08063"/>
</dbReference>
<dbReference type="SMR" id="O49118"/>
<dbReference type="GO" id="GO:0000786">
    <property type="term" value="C:nucleosome"/>
    <property type="evidence" value="ECO:0007669"/>
    <property type="project" value="UniProtKB-KW"/>
</dbReference>
<dbReference type="GO" id="GO:0005634">
    <property type="term" value="C:nucleus"/>
    <property type="evidence" value="ECO:0007669"/>
    <property type="project" value="UniProtKB-SubCell"/>
</dbReference>
<dbReference type="GO" id="GO:0003677">
    <property type="term" value="F:DNA binding"/>
    <property type="evidence" value="ECO:0007669"/>
    <property type="project" value="UniProtKB-KW"/>
</dbReference>
<dbReference type="GO" id="GO:0046982">
    <property type="term" value="F:protein heterodimerization activity"/>
    <property type="evidence" value="ECO:0007669"/>
    <property type="project" value="InterPro"/>
</dbReference>
<dbReference type="GO" id="GO:0030527">
    <property type="term" value="F:structural constituent of chromatin"/>
    <property type="evidence" value="ECO:0007669"/>
    <property type="project" value="InterPro"/>
</dbReference>
<dbReference type="CDD" id="cd22910">
    <property type="entry name" value="HFD_H2B"/>
    <property type="match status" value="1"/>
</dbReference>
<dbReference type="FunFam" id="1.10.20.10:FF:000014">
    <property type="entry name" value="Histone H2B"/>
    <property type="match status" value="1"/>
</dbReference>
<dbReference type="Gene3D" id="1.10.20.10">
    <property type="entry name" value="Histone, subunit A"/>
    <property type="match status" value="1"/>
</dbReference>
<dbReference type="InterPro" id="IPR009072">
    <property type="entry name" value="Histone-fold"/>
</dbReference>
<dbReference type="InterPro" id="IPR007125">
    <property type="entry name" value="Histone_H2A/H2B/H3"/>
</dbReference>
<dbReference type="InterPro" id="IPR000558">
    <property type="entry name" value="Histone_H2B"/>
</dbReference>
<dbReference type="InterPro" id="IPR055333">
    <property type="entry name" value="HISTONE_H2B_site"/>
</dbReference>
<dbReference type="PANTHER" id="PTHR23428">
    <property type="entry name" value="HISTONE H2B"/>
    <property type="match status" value="1"/>
</dbReference>
<dbReference type="Pfam" id="PF00125">
    <property type="entry name" value="Histone"/>
    <property type="match status" value="1"/>
</dbReference>
<dbReference type="PRINTS" id="PR00621">
    <property type="entry name" value="HISTONEH2B"/>
</dbReference>
<dbReference type="SMART" id="SM00427">
    <property type="entry name" value="H2B"/>
    <property type="match status" value="1"/>
</dbReference>
<dbReference type="SUPFAM" id="SSF47113">
    <property type="entry name" value="Histone-fold"/>
    <property type="match status" value="1"/>
</dbReference>
<dbReference type="PROSITE" id="PS00357">
    <property type="entry name" value="HISTONE_H2B"/>
    <property type="match status" value="1"/>
</dbReference>
<sequence>MAPKAAAGKKPAEKKPVEEKKAEEVPAEKKPKAGKKLPKDAGRPDKKKKRAKKSIETYKIYIFKVLKQVHPDIGISSKSMGIMNSFINDIFEKLAQESSRLARYNKKPTITSREIQTAVRLVLPGELAKHAVSEGTKAVTKFTSS</sequence>